<keyword id="KW-0067">ATP-binding</keyword>
<keyword id="KW-0997">Cell inner membrane</keyword>
<keyword id="KW-1003">Cell membrane</keyword>
<keyword id="KW-0418">Kinase</keyword>
<keyword id="KW-0472">Membrane</keyword>
<keyword id="KW-0547">Nucleotide-binding</keyword>
<keyword id="KW-0597">Phosphoprotein</keyword>
<keyword id="KW-1185">Reference proteome</keyword>
<keyword id="KW-0346">Stress response</keyword>
<keyword id="KW-0808">Transferase</keyword>
<keyword id="KW-0812">Transmembrane</keyword>
<keyword id="KW-1133">Transmembrane helix</keyword>
<keyword id="KW-0902">Two-component regulatory system</keyword>
<proteinExistence type="inferred from homology"/>
<organism>
    <name type="scientific">Salmonella typhimurium (strain LT2 / SGSC1412 / ATCC 700720)</name>
    <dbReference type="NCBI Taxonomy" id="99287"/>
    <lineage>
        <taxon>Bacteria</taxon>
        <taxon>Pseudomonadati</taxon>
        <taxon>Pseudomonadota</taxon>
        <taxon>Gammaproteobacteria</taxon>
        <taxon>Enterobacterales</taxon>
        <taxon>Enterobacteriaceae</taxon>
        <taxon>Salmonella</taxon>
    </lineage>
</organism>
<evidence type="ECO:0000250" key="1">
    <source>
        <dbReference type="UniProtKB" id="A0A0H3NIL4"/>
    </source>
</evidence>
<evidence type="ECO:0000250" key="2">
    <source>
        <dbReference type="UniProtKB" id="P0AEJ4"/>
    </source>
</evidence>
<evidence type="ECO:0000255" key="3"/>
<evidence type="ECO:0000255" key="4">
    <source>
        <dbReference type="PROSITE-ProRule" id="PRU00102"/>
    </source>
</evidence>
<evidence type="ECO:0000255" key="5">
    <source>
        <dbReference type="PROSITE-ProRule" id="PRU00107"/>
    </source>
</evidence>
<evidence type="ECO:0000269" key="6">
    <source>
    </source>
</evidence>
<evidence type="ECO:0000303" key="7">
    <source>
    </source>
</evidence>
<evidence type="ECO:0000305" key="8"/>
<dbReference type="EC" id="2.7.13.3" evidence="2"/>
<dbReference type="EMBL" id="X12374">
    <property type="protein sequence ID" value="CAA30935.1"/>
    <property type="molecule type" value="Genomic_DNA"/>
</dbReference>
<dbReference type="EMBL" id="AE006468">
    <property type="protein sequence ID" value="AAL22363.1"/>
    <property type="molecule type" value="Genomic_DNA"/>
</dbReference>
<dbReference type="PIR" id="S01367">
    <property type="entry name" value="S01367"/>
</dbReference>
<dbReference type="RefSeq" id="NP_462404.1">
    <property type="nucleotide sequence ID" value="NC_003197.2"/>
</dbReference>
<dbReference type="RefSeq" id="WP_001253818.1">
    <property type="nucleotide sequence ID" value="NC_003197.2"/>
</dbReference>
<dbReference type="SMR" id="P08982"/>
<dbReference type="STRING" id="99287.STM3501"/>
<dbReference type="PaxDb" id="99287-STM3501"/>
<dbReference type="GeneID" id="1255024"/>
<dbReference type="KEGG" id="stm:STM3501"/>
<dbReference type="PATRIC" id="fig|99287.12.peg.3700"/>
<dbReference type="HOGENOM" id="CLU_000445_89_27_6"/>
<dbReference type="OMA" id="WIRPPQA"/>
<dbReference type="PhylomeDB" id="P08982"/>
<dbReference type="BioCyc" id="SENT99287:STM3501-MONOMER"/>
<dbReference type="BRENDA" id="2.7.13.3">
    <property type="organism ID" value="5542"/>
</dbReference>
<dbReference type="PHI-base" id="PHI:2686"/>
<dbReference type="Proteomes" id="UP000001014">
    <property type="component" value="Chromosome"/>
</dbReference>
<dbReference type="GO" id="GO:0005886">
    <property type="term" value="C:plasma membrane"/>
    <property type="evidence" value="ECO:0000318"/>
    <property type="project" value="GO_Central"/>
</dbReference>
<dbReference type="GO" id="GO:0005524">
    <property type="term" value="F:ATP binding"/>
    <property type="evidence" value="ECO:0007669"/>
    <property type="project" value="UniProtKB-KW"/>
</dbReference>
<dbReference type="GO" id="GO:0000155">
    <property type="term" value="F:phosphorelay sensor kinase activity"/>
    <property type="evidence" value="ECO:0000318"/>
    <property type="project" value="GO_Central"/>
</dbReference>
<dbReference type="CDD" id="cd06225">
    <property type="entry name" value="HAMP"/>
    <property type="match status" value="1"/>
</dbReference>
<dbReference type="CDD" id="cd16950">
    <property type="entry name" value="HATPase_EnvZ-like"/>
    <property type="match status" value="1"/>
</dbReference>
<dbReference type="CDD" id="cd00082">
    <property type="entry name" value="HisKA"/>
    <property type="match status" value="1"/>
</dbReference>
<dbReference type="FunFam" id="1.10.287.130:FF:000006">
    <property type="entry name" value="Osmolarity two-component histidine kinase EnvZ"/>
    <property type="match status" value="1"/>
</dbReference>
<dbReference type="FunFam" id="3.30.565.10:FF:000018">
    <property type="entry name" value="Two-component sensor kinase EnvZ"/>
    <property type="match status" value="1"/>
</dbReference>
<dbReference type="Gene3D" id="1.10.287.130">
    <property type="match status" value="1"/>
</dbReference>
<dbReference type="Gene3D" id="3.30.565.10">
    <property type="entry name" value="Histidine kinase-like ATPase, C-terminal domain"/>
    <property type="match status" value="1"/>
</dbReference>
<dbReference type="InterPro" id="IPR050980">
    <property type="entry name" value="2C_sensor_his_kinase"/>
</dbReference>
<dbReference type="InterPro" id="IPR003660">
    <property type="entry name" value="HAMP_dom"/>
</dbReference>
<dbReference type="InterPro" id="IPR036890">
    <property type="entry name" value="HATPase_C_sf"/>
</dbReference>
<dbReference type="InterPro" id="IPR005467">
    <property type="entry name" value="His_kinase_dom"/>
</dbReference>
<dbReference type="InterPro" id="IPR003661">
    <property type="entry name" value="HisK_dim/P_dom"/>
</dbReference>
<dbReference type="InterPro" id="IPR036097">
    <property type="entry name" value="HisK_dim/P_sf"/>
</dbReference>
<dbReference type="InterPro" id="IPR004358">
    <property type="entry name" value="Sig_transdc_His_kin-like_C"/>
</dbReference>
<dbReference type="NCBIfam" id="NF007004">
    <property type="entry name" value="PRK09467.1"/>
    <property type="match status" value="1"/>
</dbReference>
<dbReference type="PANTHER" id="PTHR44936:SF5">
    <property type="entry name" value="SENSOR HISTIDINE KINASE ENVZ"/>
    <property type="match status" value="1"/>
</dbReference>
<dbReference type="PANTHER" id="PTHR44936">
    <property type="entry name" value="SENSOR PROTEIN CREC"/>
    <property type="match status" value="1"/>
</dbReference>
<dbReference type="Pfam" id="PF00672">
    <property type="entry name" value="HAMP"/>
    <property type="match status" value="1"/>
</dbReference>
<dbReference type="Pfam" id="PF02518">
    <property type="entry name" value="HATPase_c"/>
    <property type="match status" value="1"/>
</dbReference>
<dbReference type="Pfam" id="PF00512">
    <property type="entry name" value="HisKA"/>
    <property type="match status" value="1"/>
</dbReference>
<dbReference type="PRINTS" id="PR00344">
    <property type="entry name" value="BCTRLSENSOR"/>
</dbReference>
<dbReference type="SMART" id="SM00304">
    <property type="entry name" value="HAMP"/>
    <property type="match status" value="1"/>
</dbReference>
<dbReference type="SMART" id="SM00387">
    <property type="entry name" value="HATPase_c"/>
    <property type="match status" value="1"/>
</dbReference>
<dbReference type="SMART" id="SM00388">
    <property type="entry name" value="HisKA"/>
    <property type="match status" value="1"/>
</dbReference>
<dbReference type="SUPFAM" id="SSF55874">
    <property type="entry name" value="ATPase domain of HSP90 chaperone/DNA topoisomerase II/histidine kinase"/>
    <property type="match status" value="1"/>
</dbReference>
<dbReference type="SUPFAM" id="SSF47384">
    <property type="entry name" value="Homodimeric domain of signal transducing histidine kinase"/>
    <property type="match status" value="1"/>
</dbReference>
<dbReference type="PROSITE" id="PS50885">
    <property type="entry name" value="HAMP"/>
    <property type="match status" value="1"/>
</dbReference>
<dbReference type="PROSITE" id="PS50109">
    <property type="entry name" value="HIS_KIN"/>
    <property type="match status" value="1"/>
</dbReference>
<accession>P08982</accession>
<name>ENVZ_SALTY</name>
<sequence length="450" mass="50374">MRRMRFSPRSSFARTLLLIVTLLFVSLVTTYLVVLNFAILPSLQQFNKVLAYEVRMLMTDKLQLEDGTQLVVPPAFRREIYRELGISLYTNEAAEEAGLRWAQHYEFLSHQMAQQLGGPTEVRVEVNKSSPVVWLKTWLSPNIWVRVPLTEIHQGDFSPLFRYTLAIMLLAIGGAWLFIRIQNRPLVDLEHAALQVGKGIIPPPLREYGASEVRSVTRAFNHMAAGVKQLADDRTLLMAGVSHDLRTPLTRIRLATEMMGEEDGYLAESINKDIEECNAIIEQFIDYLRTGQEMPMEMADLNSVLGEVIAAESGYEREINTALQAGSIQVKMHPLSIKRAVANMVVNAARYGNGWIKVSSGTESHRAWFQVEDDGPGIKPEQRKHLFQPFVRGDSARSTSGTGLGLAIVQRIIDNHNGMLEIGTSERGGLSIRAWLPVPVARVQGTTKEA</sequence>
<protein>
    <recommendedName>
        <fullName evidence="8">Sensor histidine kinase EnvZ</fullName>
        <ecNumber evidence="2">2.7.13.3</ecNumber>
    </recommendedName>
    <alternativeName>
        <fullName evidence="8">Osmolarity sensor protein EnvZ</fullName>
    </alternativeName>
</protein>
<reference key="1">
    <citation type="journal article" date="1988" name="J. Mol. Biol.">
        <title>Structure and expression of the ompB operon, the regulatory locus for the outer membrane porin regulon in Salmonella typhimurium LT-2.</title>
        <authorList>
            <person name="Lijestroem P."/>
            <person name="Laamanen I."/>
            <person name="Palva E.T."/>
        </authorList>
    </citation>
    <scope>NUCLEOTIDE SEQUENCE [GENOMIC DNA]</scope>
    <source>
        <strain>LT2</strain>
    </source>
</reference>
<reference key="2">
    <citation type="journal article" date="2001" name="Nature">
        <title>Complete genome sequence of Salmonella enterica serovar Typhimurium LT2.</title>
        <authorList>
            <person name="McClelland M."/>
            <person name="Sanderson K.E."/>
            <person name="Spieth J."/>
            <person name="Clifton S.W."/>
            <person name="Latreille P."/>
            <person name="Courtney L."/>
            <person name="Porwollik S."/>
            <person name="Ali J."/>
            <person name="Dante M."/>
            <person name="Du F."/>
            <person name="Hou S."/>
            <person name="Layman D."/>
            <person name="Leonard S."/>
            <person name="Nguyen C."/>
            <person name="Scott K."/>
            <person name="Holmes A."/>
            <person name="Grewal N."/>
            <person name="Mulvaney E."/>
            <person name="Ryan E."/>
            <person name="Sun H."/>
            <person name="Florea L."/>
            <person name="Miller W."/>
            <person name="Stoneking T."/>
            <person name="Nhan M."/>
            <person name="Waterston R."/>
            <person name="Wilson R.K."/>
        </authorList>
    </citation>
    <scope>NUCLEOTIDE SEQUENCE [LARGE SCALE GENOMIC DNA]</scope>
    <source>
        <strain>LT2 / SGSC1412 / ATCC 700720</strain>
    </source>
</reference>
<reference key="3">
    <citation type="journal article" date="2009" name="PLoS Pathog.">
        <title>Coordinated regulation of virulence during systemic infection of Salmonella enterica serovar Typhimurium.</title>
        <authorList>
            <person name="Yoon H."/>
            <person name="McDermott J.E."/>
            <person name="Porwollik S."/>
            <person name="McClelland M."/>
            <person name="Heffron F."/>
        </authorList>
    </citation>
    <scope>DISRUPTION PHENOTYPE</scope>
    <source>
        <strain evidence="7">14028s / SGSC 2262</strain>
    </source>
</reference>
<gene>
    <name type="primary">envZ</name>
    <name type="ordered locus">STM3501</name>
</gene>
<comment type="function">
    <text evidence="1 2">Member of the two-component regulatory system EnvZ/OmpR involved in osmoregulation (particularly of genes ompF and ompC) as well as other genes (By similarity). EnvZ functions as a membrane-associated protein kinase that phosphorylates OmpR in response to environmental signals; at low osmolarity OmpR activates ompF transcription, while at high osmolarity it represses ompF and activates ompC transcription (By similarity).</text>
</comment>
<comment type="catalytic activity">
    <reaction evidence="2">
        <text>ATP + protein L-histidine = ADP + protein N-phospho-L-histidine.</text>
        <dbReference type="EC" id="2.7.13.3"/>
    </reaction>
</comment>
<comment type="subunit">
    <text evidence="2">Homodimer.</text>
</comment>
<comment type="subcellular location">
    <subcellularLocation>
        <location evidence="2">Cell inner membrane</location>
        <topology evidence="3">Multi-pass membrane protein</topology>
    </subcellularLocation>
</comment>
<comment type="domain">
    <text evidence="2">Has several major domains; the N-terminal cytoplasmic domain is followed by 2 transmembrane helices that anchor the protein in the membrane; the periplasmic domain between the helices interacts with MrzA. The cytoplasmic C-terminal domain has a HAMP domain joined by a flexible linker to a histidine kinase domain. The HAMP domain by itself is intrinsically disordered. The cytoplasmic dimerization domain (CDD) forms an osmosensitive core and includes the autophosphorylated histidine residue.</text>
</comment>
<comment type="PTM">
    <text evidence="2">Autophosphorylated.</text>
</comment>
<comment type="disruption phenotype">
    <text evidence="6">Double knockout with ompR leads to decreased expression of genes encoding virulence proteins (PubMed:19229334). Double knockout with ompR decreases virulence in mouse (PubMed:19229334).</text>
</comment>
<feature type="chain" id="PRO_0000074761" description="Sensor histidine kinase EnvZ">
    <location>
        <begin position="1"/>
        <end position="450"/>
    </location>
</feature>
<feature type="topological domain" description="Cytoplasmic" evidence="3">
    <location>
        <begin position="1"/>
        <end position="15"/>
    </location>
</feature>
<feature type="transmembrane region" description="Helical" evidence="8">
    <location>
        <begin position="16"/>
        <end position="35"/>
    </location>
</feature>
<feature type="topological domain" description="Periplasmic" evidence="3">
    <location>
        <begin position="36"/>
        <end position="158"/>
    </location>
</feature>
<feature type="transmembrane region" description="Helical" evidence="8">
    <location>
        <begin position="159"/>
        <end position="179"/>
    </location>
</feature>
<feature type="topological domain" description="Cytoplasmic" evidence="3">
    <location>
        <begin position="180"/>
        <end position="450"/>
    </location>
</feature>
<feature type="domain" description="HAMP" evidence="4">
    <location>
        <begin position="180"/>
        <end position="232"/>
    </location>
</feature>
<feature type="domain" description="Histidine kinase" evidence="5">
    <location>
        <begin position="240"/>
        <end position="440"/>
    </location>
</feature>
<feature type="region of interest" description="Cytoplasmic dimerization domain (CDD), when dimerized forms osmosensitive core" evidence="2">
    <location>
        <begin position="223"/>
        <end position="289"/>
    </location>
</feature>
<feature type="binding site" evidence="2">
    <location>
        <position position="243"/>
    </location>
    <ligand>
        <name>ATP</name>
        <dbReference type="ChEBI" id="CHEBI:30616"/>
    </ligand>
</feature>
<feature type="binding site" evidence="2">
    <location>
        <begin position="347"/>
        <end position="351"/>
    </location>
    <ligand>
        <name>ATP</name>
        <dbReference type="ChEBI" id="CHEBI:30616"/>
    </ligand>
</feature>
<feature type="binding site" evidence="2">
    <location>
        <position position="373"/>
    </location>
    <ligand>
        <name>ATP</name>
        <dbReference type="ChEBI" id="CHEBI:30616"/>
    </ligand>
</feature>
<feature type="binding site" evidence="2">
    <location>
        <begin position="392"/>
        <end position="393"/>
    </location>
    <ligand>
        <name>ATP</name>
        <dbReference type="ChEBI" id="CHEBI:30616"/>
    </ligand>
</feature>
<feature type="binding site" evidence="2">
    <location>
        <begin position="402"/>
        <end position="406"/>
    </location>
    <ligand>
        <name>ATP</name>
        <dbReference type="ChEBI" id="CHEBI:30616"/>
    </ligand>
</feature>
<feature type="modified residue" description="Phosphohistidine; by autocatalysis" evidence="2 5">
    <location>
        <position position="243"/>
    </location>
</feature>
<feature type="sequence conflict" description="In Ref. 1; CAA30935." evidence="8" ref="1">
    <original>R</original>
    <variation>L</variation>
    <location>
        <position position="206"/>
    </location>
</feature>